<protein>
    <recommendedName>
        <fullName evidence="2">Adenylosuccinate synthetase</fullName>
        <shortName evidence="2">AMPSase</shortName>
        <shortName evidence="2">AdSS</shortName>
        <ecNumber evidence="2">6.3.4.4</ecNumber>
    </recommendedName>
    <alternativeName>
        <fullName evidence="2">IMP--aspartate ligase</fullName>
    </alternativeName>
</protein>
<proteinExistence type="inferred from homology"/>
<gene>
    <name type="ORF">AFLA_083920</name>
</gene>
<accession>B8MZA3</accession>
<feature type="chain" id="PRO_0000399320" description="Adenylosuccinate synthetase">
    <location>
        <begin position="1"/>
        <end position="424"/>
    </location>
</feature>
<feature type="active site" description="Proton acceptor" evidence="2">
    <location>
        <position position="13"/>
    </location>
</feature>
<feature type="active site" description="Proton donor" evidence="2">
    <location>
        <position position="41"/>
    </location>
</feature>
<feature type="binding site" evidence="2">
    <location>
        <begin position="12"/>
        <end position="18"/>
    </location>
    <ligand>
        <name>GTP</name>
        <dbReference type="ChEBI" id="CHEBI:37565"/>
    </ligand>
</feature>
<feature type="binding site" description="in other chain" evidence="2">
    <location>
        <begin position="13"/>
        <end position="16"/>
    </location>
    <ligand>
        <name>IMP</name>
        <dbReference type="ChEBI" id="CHEBI:58053"/>
        <note>ligand shared between dimeric partners</note>
    </ligand>
</feature>
<feature type="binding site" evidence="2">
    <location>
        <position position="13"/>
    </location>
    <ligand>
        <name>Mg(2+)</name>
        <dbReference type="ChEBI" id="CHEBI:18420"/>
    </ligand>
</feature>
<feature type="binding site" description="in other chain" evidence="2">
    <location>
        <begin position="38"/>
        <end position="41"/>
    </location>
    <ligand>
        <name>IMP</name>
        <dbReference type="ChEBI" id="CHEBI:58053"/>
        <note>ligand shared between dimeric partners</note>
    </ligand>
</feature>
<feature type="binding site" evidence="2">
    <location>
        <begin position="40"/>
        <end position="42"/>
    </location>
    <ligand>
        <name>GTP</name>
        <dbReference type="ChEBI" id="CHEBI:37565"/>
    </ligand>
</feature>
<feature type="binding site" evidence="2">
    <location>
        <position position="40"/>
    </location>
    <ligand>
        <name>Mg(2+)</name>
        <dbReference type="ChEBI" id="CHEBI:18420"/>
    </ligand>
</feature>
<feature type="binding site" description="in other chain" evidence="2">
    <location>
        <position position="130"/>
    </location>
    <ligand>
        <name>IMP</name>
        <dbReference type="ChEBI" id="CHEBI:58053"/>
        <note>ligand shared between dimeric partners</note>
    </ligand>
</feature>
<feature type="binding site" evidence="2">
    <location>
        <position position="144"/>
    </location>
    <ligand>
        <name>IMP</name>
        <dbReference type="ChEBI" id="CHEBI:58053"/>
        <note>ligand shared between dimeric partners</note>
    </ligand>
</feature>
<feature type="binding site" description="in other chain" evidence="2">
    <location>
        <position position="220"/>
    </location>
    <ligand>
        <name>IMP</name>
        <dbReference type="ChEBI" id="CHEBI:58053"/>
        <note>ligand shared between dimeric partners</note>
    </ligand>
</feature>
<feature type="binding site" description="in other chain" evidence="2">
    <location>
        <position position="235"/>
    </location>
    <ligand>
        <name>IMP</name>
        <dbReference type="ChEBI" id="CHEBI:58053"/>
        <note>ligand shared between dimeric partners</note>
    </ligand>
</feature>
<feature type="binding site" evidence="2">
    <location>
        <begin position="295"/>
        <end position="301"/>
    </location>
    <ligand>
        <name>substrate</name>
    </ligand>
</feature>
<feature type="binding site" description="in other chain" evidence="2">
    <location>
        <position position="299"/>
    </location>
    <ligand>
        <name>IMP</name>
        <dbReference type="ChEBI" id="CHEBI:58053"/>
        <note>ligand shared between dimeric partners</note>
    </ligand>
</feature>
<feature type="binding site" evidence="2">
    <location>
        <position position="301"/>
    </location>
    <ligand>
        <name>GTP</name>
        <dbReference type="ChEBI" id="CHEBI:37565"/>
    </ligand>
</feature>
<feature type="binding site" evidence="2">
    <location>
        <begin position="327"/>
        <end position="329"/>
    </location>
    <ligand>
        <name>GTP</name>
        <dbReference type="ChEBI" id="CHEBI:37565"/>
    </ligand>
</feature>
<feature type="binding site" evidence="2">
    <location>
        <begin position="412"/>
        <end position="414"/>
    </location>
    <ligand>
        <name>GTP</name>
        <dbReference type="ChEBI" id="CHEBI:37565"/>
    </ligand>
</feature>
<comment type="function">
    <text evidence="1">Plays an important role in the de novo pathway and in the salvage pathway of purine nucleotide biosynthesis. Catalyzes the first committed step in the biosynthesis of AMP from IMP (By similarity).</text>
</comment>
<comment type="catalytic activity">
    <reaction evidence="2">
        <text>IMP + L-aspartate + GTP = N(6)-(1,2-dicarboxyethyl)-AMP + GDP + phosphate + 2 H(+)</text>
        <dbReference type="Rhea" id="RHEA:15753"/>
        <dbReference type="ChEBI" id="CHEBI:15378"/>
        <dbReference type="ChEBI" id="CHEBI:29991"/>
        <dbReference type="ChEBI" id="CHEBI:37565"/>
        <dbReference type="ChEBI" id="CHEBI:43474"/>
        <dbReference type="ChEBI" id="CHEBI:57567"/>
        <dbReference type="ChEBI" id="CHEBI:58053"/>
        <dbReference type="ChEBI" id="CHEBI:58189"/>
        <dbReference type="EC" id="6.3.4.4"/>
    </reaction>
</comment>
<comment type="cofactor">
    <cofactor evidence="2">
        <name>Mg(2+)</name>
        <dbReference type="ChEBI" id="CHEBI:18420"/>
    </cofactor>
    <text evidence="2">Binds 1 Mg(2+) ion per subunit.</text>
</comment>
<comment type="pathway">
    <text evidence="2">Purine metabolism; AMP biosynthesis via de novo pathway; AMP from IMP: step 1/2.</text>
</comment>
<comment type="subunit">
    <text evidence="2">Homodimer.</text>
</comment>
<comment type="subcellular location">
    <subcellularLocation>
        <location evidence="2">Cytoplasm</location>
    </subcellularLocation>
</comment>
<comment type="similarity">
    <text evidence="2">Belongs to the adenylosuccinate synthetase family.</text>
</comment>
<name>PURA_ASPFN</name>
<organism>
    <name type="scientific">Aspergillus flavus (strain ATCC 200026 / FGSC A1120 / IAM 13836 / NRRL 3357 / JCM 12722 / SRRC 167)</name>
    <dbReference type="NCBI Taxonomy" id="332952"/>
    <lineage>
        <taxon>Eukaryota</taxon>
        <taxon>Fungi</taxon>
        <taxon>Dikarya</taxon>
        <taxon>Ascomycota</taxon>
        <taxon>Pezizomycotina</taxon>
        <taxon>Eurotiomycetes</taxon>
        <taxon>Eurotiomycetidae</taxon>
        <taxon>Eurotiales</taxon>
        <taxon>Aspergillaceae</taxon>
        <taxon>Aspergillus</taxon>
        <taxon>Aspergillus subgen. Circumdati</taxon>
    </lineage>
</organism>
<dbReference type="EC" id="6.3.4.4" evidence="2"/>
<dbReference type="EMBL" id="EQ963472">
    <property type="protein sequence ID" value="EED57695.1"/>
    <property type="molecule type" value="Genomic_DNA"/>
</dbReference>
<dbReference type="RefSeq" id="XP_002373307.1">
    <property type="nucleotide sequence ID" value="XM_002373266.1"/>
</dbReference>
<dbReference type="SMR" id="B8MZA3"/>
<dbReference type="STRING" id="332952.B8MZA3"/>
<dbReference type="EnsemblFungi" id="EED57695">
    <property type="protein sequence ID" value="EED57695"/>
    <property type="gene ID" value="AFLA_083920"/>
</dbReference>
<dbReference type="VEuPathDB" id="FungiDB:AFLA_003981"/>
<dbReference type="eggNOG" id="KOG1355">
    <property type="taxonomic scope" value="Eukaryota"/>
</dbReference>
<dbReference type="HOGENOM" id="CLU_029848_3_2_1"/>
<dbReference type="OMA" id="FHHAKPI"/>
<dbReference type="UniPathway" id="UPA00075">
    <property type="reaction ID" value="UER00335"/>
</dbReference>
<dbReference type="GO" id="GO:0005737">
    <property type="term" value="C:cytoplasm"/>
    <property type="evidence" value="ECO:0007669"/>
    <property type="project" value="UniProtKB-SubCell"/>
</dbReference>
<dbReference type="GO" id="GO:0004019">
    <property type="term" value="F:adenylosuccinate synthase activity"/>
    <property type="evidence" value="ECO:0007669"/>
    <property type="project" value="UniProtKB-UniRule"/>
</dbReference>
<dbReference type="GO" id="GO:0016208">
    <property type="term" value="F:AMP binding"/>
    <property type="evidence" value="ECO:0007669"/>
    <property type="project" value="EnsemblFungi"/>
</dbReference>
<dbReference type="GO" id="GO:0019002">
    <property type="term" value="F:GMP binding"/>
    <property type="evidence" value="ECO:0007669"/>
    <property type="project" value="EnsemblFungi"/>
</dbReference>
<dbReference type="GO" id="GO:0005525">
    <property type="term" value="F:GTP binding"/>
    <property type="evidence" value="ECO:0007669"/>
    <property type="project" value="UniProtKB-UniRule"/>
</dbReference>
<dbReference type="GO" id="GO:0000287">
    <property type="term" value="F:magnesium ion binding"/>
    <property type="evidence" value="ECO:0007669"/>
    <property type="project" value="UniProtKB-UniRule"/>
</dbReference>
<dbReference type="GO" id="GO:0044208">
    <property type="term" value="P:'de novo' AMP biosynthetic process"/>
    <property type="evidence" value="ECO:0007669"/>
    <property type="project" value="UniProtKB-UniRule"/>
</dbReference>
<dbReference type="GO" id="GO:0071276">
    <property type="term" value="P:cellular response to cadmium ion"/>
    <property type="evidence" value="ECO:0007669"/>
    <property type="project" value="EnsemblFungi"/>
</dbReference>
<dbReference type="GO" id="GO:0046040">
    <property type="term" value="P:IMP metabolic process"/>
    <property type="evidence" value="ECO:0007669"/>
    <property type="project" value="TreeGrafter"/>
</dbReference>
<dbReference type="CDD" id="cd03108">
    <property type="entry name" value="AdSS"/>
    <property type="match status" value="1"/>
</dbReference>
<dbReference type="FunFam" id="1.10.300.10:FF:000001">
    <property type="entry name" value="Adenylosuccinate synthetase"/>
    <property type="match status" value="1"/>
</dbReference>
<dbReference type="FunFam" id="3.90.170.10:FF:000001">
    <property type="entry name" value="Adenylosuccinate synthetase"/>
    <property type="match status" value="1"/>
</dbReference>
<dbReference type="Gene3D" id="3.40.440.10">
    <property type="entry name" value="Adenylosuccinate Synthetase, subunit A, domain 1"/>
    <property type="match status" value="1"/>
</dbReference>
<dbReference type="Gene3D" id="1.10.300.10">
    <property type="entry name" value="Adenylosuccinate Synthetase, subunit A, domain 2"/>
    <property type="match status" value="1"/>
</dbReference>
<dbReference type="Gene3D" id="3.90.170.10">
    <property type="entry name" value="Adenylosuccinate Synthetase, subunit A, domain 3"/>
    <property type="match status" value="1"/>
</dbReference>
<dbReference type="HAMAP" id="MF_00011">
    <property type="entry name" value="Adenylosucc_synth"/>
    <property type="match status" value="1"/>
</dbReference>
<dbReference type="InterPro" id="IPR018220">
    <property type="entry name" value="Adenylosuccin_syn_GTP-bd"/>
</dbReference>
<dbReference type="InterPro" id="IPR033128">
    <property type="entry name" value="Adenylosuccin_syn_Lys_AS"/>
</dbReference>
<dbReference type="InterPro" id="IPR042109">
    <property type="entry name" value="Adenylosuccinate_synth_dom1"/>
</dbReference>
<dbReference type="InterPro" id="IPR042110">
    <property type="entry name" value="Adenylosuccinate_synth_dom2"/>
</dbReference>
<dbReference type="InterPro" id="IPR042111">
    <property type="entry name" value="Adenylosuccinate_synth_dom3"/>
</dbReference>
<dbReference type="InterPro" id="IPR001114">
    <property type="entry name" value="Adenylosuccinate_synthetase"/>
</dbReference>
<dbReference type="InterPro" id="IPR027417">
    <property type="entry name" value="P-loop_NTPase"/>
</dbReference>
<dbReference type="NCBIfam" id="NF002223">
    <property type="entry name" value="PRK01117.1"/>
    <property type="match status" value="1"/>
</dbReference>
<dbReference type="NCBIfam" id="TIGR00184">
    <property type="entry name" value="purA"/>
    <property type="match status" value="1"/>
</dbReference>
<dbReference type="PANTHER" id="PTHR11846">
    <property type="entry name" value="ADENYLOSUCCINATE SYNTHETASE"/>
    <property type="match status" value="1"/>
</dbReference>
<dbReference type="PANTHER" id="PTHR11846:SF0">
    <property type="entry name" value="ADENYLOSUCCINATE SYNTHETASE"/>
    <property type="match status" value="1"/>
</dbReference>
<dbReference type="Pfam" id="PF00709">
    <property type="entry name" value="Adenylsucc_synt"/>
    <property type="match status" value="1"/>
</dbReference>
<dbReference type="SMART" id="SM00788">
    <property type="entry name" value="Adenylsucc_synt"/>
    <property type="match status" value="1"/>
</dbReference>
<dbReference type="SUPFAM" id="SSF52540">
    <property type="entry name" value="P-loop containing nucleoside triphosphate hydrolases"/>
    <property type="match status" value="1"/>
</dbReference>
<dbReference type="PROSITE" id="PS01266">
    <property type="entry name" value="ADENYLOSUCCIN_SYN_1"/>
    <property type="match status" value="1"/>
</dbReference>
<dbReference type="PROSITE" id="PS00513">
    <property type="entry name" value="ADENYLOSUCCIN_SYN_2"/>
    <property type="match status" value="1"/>
</dbReference>
<evidence type="ECO:0000250" key="1"/>
<evidence type="ECO:0000255" key="2">
    <source>
        <dbReference type="HAMAP-Rule" id="MF_03125"/>
    </source>
</evidence>
<keyword id="KW-0963">Cytoplasm</keyword>
<keyword id="KW-0342">GTP-binding</keyword>
<keyword id="KW-0436">Ligase</keyword>
<keyword id="KW-0460">Magnesium</keyword>
<keyword id="KW-0479">Metal-binding</keyword>
<keyword id="KW-0547">Nucleotide-binding</keyword>
<keyword id="KW-0658">Purine biosynthesis</keyword>
<sequence length="424" mass="46283">MGVSIVLGSQWGDEGKGKITDMLAQQATLCCRAAGGHNAGHTIVHGNKTYDFHILPSGLISPSCINLIGAGTVVHVPSFFKELASLEEKGLEGASKRIFISDRAHVCLQLHSVVDGLEEAKLGGRKVGTTGKGIGPCYSDKASRRGIRVGEILDEAVFERKLRSLDAGYRARFGDLEYNVEEELAQFKEYRKLLGPYIVDQLAFLQKYKDSPNTLVEGANALMLDLDHGTYPYVTSSSTGLGGAMQALSLNPTSIKSVIGVVKAYTTRVGSGPFPSEQFNADGDKLQSVGREFGVTTGRRRRCGWLDLVVCRYSQAINHYTALNLTKLDVLDDFDEIKVGVAYILPDGTRTENTIPADAEVLEKVKVEYVTLPGWKSNTMGVKKYEDLPDNARAYIEYIERELGGVPVKWIGTGPARDDMIARE</sequence>
<reference key="1">
    <citation type="journal article" date="2015" name="Genome Announc.">
        <title>Genome sequence of Aspergillus flavus NRRL 3357, a strain that causes aflatoxin contamination of food and feed.</title>
        <authorList>
            <person name="Nierman W.C."/>
            <person name="Yu J."/>
            <person name="Fedorova-Abrams N.D."/>
            <person name="Losada L."/>
            <person name="Cleveland T.E."/>
            <person name="Bhatnagar D."/>
            <person name="Bennett J.W."/>
            <person name="Dean R."/>
            <person name="Payne G.A."/>
        </authorList>
    </citation>
    <scope>NUCLEOTIDE SEQUENCE [LARGE SCALE GENOMIC DNA]</scope>
    <source>
        <strain>ATCC 200026 / FGSC A1120 / IAM 13836 / NRRL 3357 / JCM 12722 / SRRC 167</strain>
    </source>
</reference>